<protein>
    <recommendedName>
        <fullName>Ecto-ADP-ribosyltransferase 5</fullName>
        <ecNumber>2.4.2.31</ecNumber>
    </recommendedName>
    <alternativeName>
        <fullName>ADP-ribosyltransferase C2 and C3 toxin-like 5</fullName>
        <shortName>ARTC5</shortName>
    </alternativeName>
    <alternativeName>
        <fullName>Mono(ADP-ribosyl)transferase 5</fullName>
    </alternativeName>
    <alternativeName>
        <fullName>NAD(P)(+)--arginine ADP-ribosyltransferase 5</fullName>
    </alternativeName>
    <alternativeName>
        <fullName>YAC-2</fullName>
    </alternativeName>
</protein>
<organism>
    <name type="scientific">Mus musculus</name>
    <name type="common">Mouse</name>
    <dbReference type="NCBI Taxonomy" id="10090"/>
    <lineage>
        <taxon>Eukaryota</taxon>
        <taxon>Metazoa</taxon>
        <taxon>Chordata</taxon>
        <taxon>Craniata</taxon>
        <taxon>Vertebrata</taxon>
        <taxon>Euteleostomi</taxon>
        <taxon>Mammalia</taxon>
        <taxon>Eutheria</taxon>
        <taxon>Euarchontoglires</taxon>
        <taxon>Glires</taxon>
        <taxon>Rodentia</taxon>
        <taxon>Myomorpha</taxon>
        <taxon>Muroidea</taxon>
        <taxon>Muridae</taxon>
        <taxon>Murinae</taxon>
        <taxon>Mus</taxon>
        <taxon>Mus</taxon>
    </lineage>
</organism>
<sequence length="309" mass="34333">MILEDLLMVLSCLSLHALWKVRAVPILPLSLVPDTFDDAYVGCSEEMEEKAGLLLKEEMARHALLRESWEAAQEAWAHRRHKLTLPPGFKAQHGVAIMVYTNSSNTLYWELNQAVRTGGGSRELYMRHFPFKALHFYLTRALQLLRGSGGCSRGPGEVVFRGVGSLHFEPKRLGDSVRLGQFTSSSVDERVARRFGNATFFNLRTCFGAPIQALSVFPEEREVLIPPHEVFLVTGFSQDGAQSIVTLWSYDQTCSHFNCAYLGGEKRRGCVSSRAVGQPEAPSTEALALQSGKTLLLDPRKLQLSRAGP</sequence>
<evidence type="ECO:0000250" key="1"/>
<evidence type="ECO:0000255" key="2"/>
<evidence type="ECO:0000255" key="3">
    <source>
        <dbReference type="PROSITE-ProRule" id="PRU01340"/>
    </source>
</evidence>
<evidence type="ECO:0000305" key="4"/>
<feature type="signal peptide" evidence="2">
    <location>
        <begin position="1"/>
        <end position="23"/>
    </location>
</feature>
<feature type="chain" id="PRO_0000019334" description="Ecto-ADP-ribosyltransferase 5">
    <location>
        <begin position="24"/>
        <end position="309"/>
    </location>
</feature>
<feature type="domain" description="TR mART core" evidence="3">
    <location>
        <begin position="63"/>
        <end position="253"/>
    </location>
</feature>
<feature type="active site" evidence="3">
    <location>
        <position position="161"/>
    </location>
</feature>
<feature type="active site" evidence="3">
    <location>
        <position position="184"/>
    </location>
</feature>
<feature type="active site" evidence="3">
    <location>
        <position position="222"/>
    </location>
</feature>
<feature type="binding site" evidence="1">
    <location>
        <position position="100"/>
    </location>
    <ligand>
        <name>NAD(+)</name>
        <dbReference type="ChEBI" id="CHEBI:57540"/>
    </ligand>
</feature>
<feature type="binding site" evidence="1">
    <location>
        <position position="161"/>
    </location>
    <ligand>
        <name>NAD(+)</name>
        <dbReference type="ChEBI" id="CHEBI:57540"/>
    </ligand>
</feature>
<feature type="binding site" evidence="1">
    <location>
        <position position="181"/>
    </location>
    <ligand>
        <name>NAD(+)</name>
        <dbReference type="ChEBI" id="CHEBI:57540"/>
    </ligand>
</feature>
<feature type="binding site" evidence="1">
    <location>
        <position position="215"/>
    </location>
    <ligand>
        <name>NAD(+)</name>
        <dbReference type="ChEBI" id="CHEBI:57540"/>
    </ligand>
</feature>
<feature type="glycosylation site" description="N-linked (GlcNAc...) asparagine" evidence="2">
    <location>
        <position position="102"/>
    </location>
</feature>
<feature type="glycosylation site" description="N-linked (GlcNAc...) asparagine" evidence="2">
    <location>
        <position position="197"/>
    </location>
</feature>
<feature type="disulfide bond" evidence="1">
    <location>
        <begin position="43"/>
        <end position="259"/>
    </location>
</feature>
<feature type="splice variant" id="VSP_003381" description="In isoform 3." evidence="4">
    <location>
        <begin position="115"/>
        <end position="212"/>
    </location>
</feature>
<feature type="splice variant" id="VSP_003380" description="In isoform 2." evidence="4">
    <location>
        <begin position="120"/>
        <end position="264"/>
    </location>
</feature>
<feature type="splice variant" id="VSP_003382" description="In isoform 4." evidence="4">
    <original>GSREL</original>
    <variation>VVCLP</variation>
    <location>
        <begin position="120"/>
        <end position="124"/>
    </location>
</feature>
<feature type="splice variant" id="VSP_003383" description="In isoform 4." evidence="4">
    <location>
        <begin position="125"/>
        <end position="309"/>
    </location>
</feature>
<feature type="sequence conflict" description="In Ref. 1; AAC52773." evidence="4" ref="1">
    <original>LRESWEAAQEAWAHRRHKL</original>
    <variation>PAPILGSSTRGLGTPASQA</variation>
    <location>
        <begin position="65"/>
        <end position="83"/>
    </location>
</feature>
<feature type="sequence conflict" description="In Ref. 1; AAC52773 and 2; CAC48193/CAC50567." evidence="4" ref="1 2">
    <original>W</original>
    <variation>S</variation>
    <location>
        <position position="248"/>
    </location>
</feature>
<feature type="sequence conflict" description="In Ref. 1; AAC52773 and 2; CAC48193/CAC50566/CAC50567." evidence="4" ref="1 2">
    <original>R</original>
    <variation>H</variation>
    <location>
        <position position="268"/>
    </location>
</feature>
<accession>P70352</accession>
<accession>E9QM95</accession>
<accession>Q91VF7</accession>
<accession>Q91X06</accession>
<accession>Q91X07</accession>
<accession>Q921A5</accession>
<reference key="1">
    <citation type="journal article" date="1996" name="J. Biol. Chem.">
        <title>Cloning and characterization of a novel membrane-associated lymphocyte NAD:arginine ADP-ribosyltransferase.</title>
        <authorList>
            <person name="Okazaki I.J."/>
            <person name="Kim H.-J."/>
            <person name="Moss J."/>
        </authorList>
    </citation>
    <scope>NUCLEOTIDE SEQUENCE [MRNA] (ISOFORM 1)</scope>
    <source>
        <tissue>Lymphoma</tissue>
    </source>
</reference>
<reference key="2">
    <citation type="journal article" date="2001" name="Gene">
        <title>Structure, chromosomal localization, and expression of the gene for mouse ecto-mono(ADP-ribosyl)transferase ART5.</title>
        <authorList>
            <person name="Glowacki G."/>
            <person name="Braren R."/>
            <person name="Cetkovic-Cvrlje M."/>
            <person name="Leiter E.H."/>
            <person name="Haag F."/>
            <person name="Koch-Nolte F."/>
        </authorList>
    </citation>
    <scope>NUCLEOTIDE SEQUENCE [GENOMIC DNA] (ISOFORMS 1; 2; 3 AND 4)</scope>
    <source>
        <strain>129/Ola</strain>
        <tissue>Testis</tissue>
    </source>
</reference>
<reference key="3">
    <citation type="journal article" date="2009" name="PLoS Biol.">
        <title>Lineage-specific biology revealed by a finished genome assembly of the mouse.</title>
        <authorList>
            <person name="Church D.M."/>
            <person name="Goodstadt L."/>
            <person name="Hillier L.W."/>
            <person name="Zody M.C."/>
            <person name="Goldstein S."/>
            <person name="She X."/>
            <person name="Bult C.J."/>
            <person name="Agarwala R."/>
            <person name="Cherry J.L."/>
            <person name="DiCuccio M."/>
            <person name="Hlavina W."/>
            <person name="Kapustin Y."/>
            <person name="Meric P."/>
            <person name="Maglott D."/>
            <person name="Birtle Z."/>
            <person name="Marques A.C."/>
            <person name="Graves T."/>
            <person name="Zhou S."/>
            <person name="Teague B."/>
            <person name="Potamousis K."/>
            <person name="Churas C."/>
            <person name="Place M."/>
            <person name="Herschleb J."/>
            <person name="Runnheim R."/>
            <person name="Forrest D."/>
            <person name="Amos-Landgraf J."/>
            <person name="Schwartz D.C."/>
            <person name="Cheng Z."/>
            <person name="Lindblad-Toh K."/>
            <person name="Eichler E.E."/>
            <person name="Ponting C.P."/>
        </authorList>
    </citation>
    <scope>NUCLEOTIDE SEQUENCE [LARGE SCALE GENOMIC DNA]</scope>
    <source>
        <strain>C57BL/6J</strain>
    </source>
</reference>
<gene>
    <name type="primary">Art5</name>
</gene>
<dbReference type="EC" id="2.4.2.31"/>
<dbReference type="EMBL" id="U60881">
    <property type="protein sequence ID" value="AAC52773.1"/>
    <property type="molecule type" value="mRNA"/>
</dbReference>
<dbReference type="EMBL" id="AJ295722">
    <property type="protein sequence ID" value="CAC48193.1"/>
    <property type="molecule type" value="Genomic_DNA"/>
</dbReference>
<dbReference type="EMBL" id="AJ297547">
    <property type="protein sequence ID" value="CAC50566.1"/>
    <property type="molecule type" value="mRNA"/>
</dbReference>
<dbReference type="EMBL" id="AJ297548">
    <property type="protein sequence ID" value="CAC50567.1"/>
    <property type="molecule type" value="mRNA"/>
</dbReference>
<dbReference type="EMBL" id="AJ295843">
    <property type="protein sequence ID" value="CAC69242.1"/>
    <property type="molecule type" value="mRNA"/>
</dbReference>
<dbReference type="EMBL" id="AC132297">
    <property type="status" value="NOT_ANNOTATED_CDS"/>
    <property type="molecule type" value="Genomic_DNA"/>
</dbReference>
<dbReference type="CCDS" id="CCDS21525.1">
    <molecule id="P70352-1"/>
</dbReference>
<dbReference type="RefSeq" id="NP_001278283.1">
    <molecule id="P70352-1"/>
    <property type="nucleotide sequence ID" value="NM_001291354.2"/>
</dbReference>
<dbReference type="RefSeq" id="NP_001398914.1">
    <molecule id="P70352-1"/>
    <property type="nucleotide sequence ID" value="NM_001411985.1"/>
</dbReference>
<dbReference type="RefSeq" id="NP_001398917.1">
    <molecule id="P70352-3"/>
    <property type="nucleotide sequence ID" value="NM_001411988.1"/>
</dbReference>
<dbReference type="RefSeq" id="NP_001398918.1">
    <molecule id="P70352-3"/>
    <property type="nucleotide sequence ID" value="NM_001411989.1"/>
</dbReference>
<dbReference type="RefSeq" id="NP_001398920.1">
    <molecule id="P70352-2"/>
    <property type="nucleotide sequence ID" value="NM_001411991.1"/>
</dbReference>
<dbReference type="RefSeq" id="NP_001398921.1">
    <molecule id="P70352-2"/>
    <property type="nucleotide sequence ID" value="NM_001411992.1"/>
</dbReference>
<dbReference type="RefSeq" id="NP_031517.2">
    <molecule id="P70352-1"/>
    <property type="nucleotide sequence ID" value="NM_007491.3"/>
</dbReference>
<dbReference type="RefSeq" id="XP_006507322.1">
    <property type="nucleotide sequence ID" value="XM_006507259.3"/>
</dbReference>
<dbReference type="RefSeq" id="XP_006507323.1">
    <property type="nucleotide sequence ID" value="XM_006507260.2"/>
</dbReference>
<dbReference type="RefSeq" id="XP_006507326.1">
    <molecule id="P70352-4"/>
    <property type="nucleotide sequence ID" value="XM_006507263.5"/>
</dbReference>
<dbReference type="SMR" id="P70352"/>
<dbReference type="FunCoup" id="P70352">
    <property type="interactions" value="9"/>
</dbReference>
<dbReference type="STRING" id="10090.ENSMUSP00000102550"/>
<dbReference type="GlyCosmos" id="P70352">
    <property type="glycosylation" value="2 sites, No reported glycans"/>
</dbReference>
<dbReference type="GlyGen" id="P70352">
    <property type="glycosylation" value="2 sites"/>
</dbReference>
<dbReference type="iPTMnet" id="P70352"/>
<dbReference type="PhosphoSitePlus" id="P70352"/>
<dbReference type="PaxDb" id="10090-ENSMUSP00000102550"/>
<dbReference type="ProteomicsDB" id="252771">
    <molecule id="P70352-1"/>
</dbReference>
<dbReference type="ProteomicsDB" id="252772">
    <molecule id="P70352-2"/>
</dbReference>
<dbReference type="ProteomicsDB" id="252773">
    <molecule id="P70352-3"/>
</dbReference>
<dbReference type="Antibodypedia" id="23345">
    <property type="antibodies" value="221 antibodies from 25 providers"/>
</dbReference>
<dbReference type="DNASU" id="11875"/>
<dbReference type="Ensembl" id="ENSMUST00000094128.9">
    <molecule id="P70352-1"/>
    <property type="protein sequence ID" value="ENSMUSP00000091678.3"/>
    <property type="gene ID" value="ENSMUSG00000070424.13"/>
</dbReference>
<dbReference type="Ensembl" id="ENSMUST00000106934.2">
    <molecule id="P70352-3"/>
    <property type="protein sequence ID" value="ENSMUSP00000102547.2"/>
    <property type="gene ID" value="ENSMUSG00000070424.13"/>
</dbReference>
<dbReference type="Ensembl" id="ENSMUST00000106935.8">
    <molecule id="P70352-2"/>
    <property type="protein sequence ID" value="ENSMUSP00000102548.2"/>
    <property type="gene ID" value="ENSMUSG00000070424.13"/>
</dbReference>
<dbReference type="Ensembl" id="ENSMUST00000106937.8">
    <molecule id="P70352-1"/>
    <property type="protein sequence ID" value="ENSMUSP00000102550.2"/>
    <property type="gene ID" value="ENSMUSG00000070424.13"/>
</dbReference>
<dbReference type="GeneID" id="11875"/>
<dbReference type="KEGG" id="mmu:11875"/>
<dbReference type="UCSC" id="uc009iqp.2">
    <molecule id="P70352-3"/>
    <property type="organism name" value="mouse"/>
</dbReference>
<dbReference type="UCSC" id="uc012fqt.1">
    <molecule id="P70352-1"/>
    <property type="organism name" value="mouse"/>
</dbReference>
<dbReference type="AGR" id="MGI:107948"/>
<dbReference type="CTD" id="116969"/>
<dbReference type="MGI" id="MGI:107948">
    <property type="gene designation" value="Art5"/>
</dbReference>
<dbReference type="VEuPathDB" id="HostDB:ENSMUSG00000070424"/>
<dbReference type="eggNOG" id="ENOG502SKQR">
    <property type="taxonomic scope" value="Eukaryota"/>
</dbReference>
<dbReference type="GeneTree" id="ENSGT01030000234601"/>
<dbReference type="HOGENOM" id="CLU_059744_3_0_1"/>
<dbReference type="InParanoid" id="P70352"/>
<dbReference type="OMA" id="WEHRRQG"/>
<dbReference type="OrthoDB" id="423533at2759"/>
<dbReference type="PhylomeDB" id="P70352"/>
<dbReference type="TreeFam" id="TF335356"/>
<dbReference type="BRENDA" id="2.4.2.31">
    <property type="organism ID" value="3474"/>
</dbReference>
<dbReference type="BioGRID-ORCS" id="11875">
    <property type="hits" value="5 hits in 77 CRISPR screens"/>
</dbReference>
<dbReference type="ChiTaRS" id="Art5">
    <property type="organism name" value="mouse"/>
</dbReference>
<dbReference type="PRO" id="PR:P70352"/>
<dbReference type="Proteomes" id="UP000000589">
    <property type="component" value="Chromosome 7"/>
</dbReference>
<dbReference type="RNAct" id="P70352">
    <property type="molecule type" value="protein"/>
</dbReference>
<dbReference type="Bgee" id="ENSMUSG00000070424">
    <property type="expression patterns" value="Expressed in spermatid and 99 other cell types or tissues"/>
</dbReference>
<dbReference type="ExpressionAtlas" id="P70352">
    <property type="expression patterns" value="baseline and differential"/>
</dbReference>
<dbReference type="GO" id="GO:0005576">
    <property type="term" value="C:extracellular region"/>
    <property type="evidence" value="ECO:0007669"/>
    <property type="project" value="UniProtKB-SubCell"/>
</dbReference>
<dbReference type="GO" id="GO:0016020">
    <property type="term" value="C:membrane"/>
    <property type="evidence" value="ECO:0000314"/>
    <property type="project" value="MGI"/>
</dbReference>
<dbReference type="GO" id="GO:0003953">
    <property type="term" value="F:NAD+ nucleosidase activity"/>
    <property type="evidence" value="ECO:0000314"/>
    <property type="project" value="MGI"/>
</dbReference>
<dbReference type="GO" id="GO:0106274">
    <property type="term" value="F:NAD+-protein-arginine ADP-ribosyltransferase activity"/>
    <property type="evidence" value="ECO:0000314"/>
    <property type="project" value="MGI"/>
</dbReference>
<dbReference type="GO" id="GO:0016779">
    <property type="term" value="F:nucleotidyltransferase activity"/>
    <property type="evidence" value="ECO:0007669"/>
    <property type="project" value="UniProtKB-KW"/>
</dbReference>
<dbReference type="FunFam" id="3.90.176.10:FF:000001">
    <property type="entry name" value="NAD(P)(+)--arginine ADP-ribosyltransferase"/>
    <property type="match status" value="1"/>
</dbReference>
<dbReference type="Gene3D" id="3.90.176.10">
    <property type="entry name" value="Toxin ADP-ribosyltransferase, Chain A, domain 1"/>
    <property type="match status" value="1"/>
</dbReference>
<dbReference type="InterPro" id="IPR050999">
    <property type="entry name" value="ADP-ribosyltransferase_ARG"/>
</dbReference>
<dbReference type="InterPro" id="IPR000768">
    <property type="entry name" value="ART"/>
</dbReference>
<dbReference type="PANTHER" id="PTHR10339">
    <property type="entry name" value="ADP-RIBOSYLTRANSFERASE"/>
    <property type="match status" value="1"/>
</dbReference>
<dbReference type="PANTHER" id="PTHR10339:SF2">
    <property type="entry name" value="ECTO-ADP-RIBOSYLTRANSFERASE 5"/>
    <property type="match status" value="1"/>
</dbReference>
<dbReference type="Pfam" id="PF01129">
    <property type="entry name" value="ART"/>
    <property type="match status" value="1"/>
</dbReference>
<dbReference type="PRINTS" id="PR00970">
    <property type="entry name" value="RIBTRNSFRASE"/>
</dbReference>
<dbReference type="SUPFAM" id="SSF56399">
    <property type="entry name" value="ADP-ribosylation"/>
    <property type="match status" value="1"/>
</dbReference>
<dbReference type="PROSITE" id="PS01291">
    <property type="entry name" value="ART"/>
    <property type="match status" value="1"/>
</dbReference>
<dbReference type="PROSITE" id="PS51996">
    <property type="entry name" value="TR_MART"/>
    <property type="match status" value="1"/>
</dbReference>
<keyword id="KW-0025">Alternative splicing</keyword>
<keyword id="KW-1015">Disulfide bond</keyword>
<keyword id="KW-0325">Glycoprotein</keyword>
<keyword id="KW-0328">Glycosyltransferase</keyword>
<keyword id="KW-0472">Membrane</keyword>
<keyword id="KW-0520">NAD</keyword>
<keyword id="KW-0521">NADP</keyword>
<keyword id="KW-0548">Nucleotidyltransferase</keyword>
<keyword id="KW-1185">Reference proteome</keyword>
<keyword id="KW-0964">Secreted</keyword>
<keyword id="KW-0732">Signal</keyword>
<keyword id="KW-0808">Transferase</keyword>
<name>NAR5_MOUSE</name>
<proteinExistence type="evidence at transcript level"/>
<comment type="catalytic activity">
    <reaction>
        <text>L-arginyl-[protein] + NAD(+) = N(omega)-(ADP-D-ribosyl)-L-arginyl-[protein] + nicotinamide + H(+)</text>
        <dbReference type="Rhea" id="RHEA:19149"/>
        <dbReference type="Rhea" id="RHEA-COMP:10532"/>
        <dbReference type="Rhea" id="RHEA-COMP:15087"/>
        <dbReference type="ChEBI" id="CHEBI:15378"/>
        <dbReference type="ChEBI" id="CHEBI:17154"/>
        <dbReference type="ChEBI" id="CHEBI:29965"/>
        <dbReference type="ChEBI" id="CHEBI:57540"/>
        <dbReference type="ChEBI" id="CHEBI:142554"/>
        <dbReference type="EC" id="2.4.2.31"/>
    </reaction>
</comment>
<comment type="subcellular location">
    <subcellularLocation>
        <location>Secreted</location>
    </subcellularLocation>
    <subcellularLocation>
        <location>Membrane</location>
    </subcellularLocation>
    <text>Membrane-associated.</text>
</comment>
<comment type="alternative products">
    <event type="alternative splicing"/>
    <isoform>
        <id>P70352-1</id>
        <name>1</name>
        <sequence type="displayed"/>
    </isoform>
    <isoform>
        <id>P70352-2</id>
        <name>2</name>
        <sequence type="described" ref="VSP_003380"/>
    </isoform>
    <isoform>
        <id>P70352-3</id>
        <name>3</name>
        <sequence type="described" ref="VSP_003381"/>
    </isoform>
    <isoform>
        <id>P70352-4</id>
        <name>4</name>
        <sequence type="described" ref="VSP_003382 VSP_003383"/>
    </isoform>
</comment>
<comment type="tissue specificity">
    <text>Abundantly expressed in testis. Lower levels in cardiac and skeletal muscle.</text>
</comment>
<comment type="similarity">
    <text evidence="4">Belongs to the Arg-specific ADP-ribosyltransferase family.</text>
</comment>